<accession>Q1CT93</accession>
<reference key="1">
    <citation type="journal article" date="2006" name="Proc. Natl. Acad. Sci. U.S.A.">
        <title>The complete genome sequence of a chronic atrophic gastritis Helicobacter pylori strain: evolution during disease progression.</title>
        <authorList>
            <person name="Oh J.D."/>
            <person name="Kling-Baeckhed H."/>
            <person name="Giannakis M."/>
            <person name="Xu J."/>
            <person name="Fulton R.S."/>
            <person name="Fulton L.A."/>
            <person name="Cordum H.S."/>
            <person name="Wang C."/>
            <person name="Elliott G."/>
            <person name="Edwards J."/>
            <person name="Mardis E.R."/>
            <person name="Engstrand L.G."/>
            <person name="Gordon J.I."/>
        </authorList>
    </citation>
    <scope>NUCLEOTIDE SEQUENCE [LARGE SCALE GENOMIC DNA]</scope>
    <source>
        <strain>HPAG1</strain>
    </source>
</reference>
<evidence type="ECO:0000255" key="1">
    <source>
        <dbReference type="HAMAP-Rule" id="MF_01220"/>
    </source>
</evidence>
<protein>
    <recommendedName>
        <fullName evidence="1">Uridylate kinase</fullName>
        <shortName evidence="1">UK</shortName>
        <ecNumber evidence="1">2.7.4.22</ecNumber>
    </recommendedName>
    <alternativeName>
        <fullName evidence="1">Uridine monophosphate kinase</fullName>
        <shortName evidence="1">UMP kinase</shortName>
        <shortName evidence="1">UMPK</shortName>
    </alternativeName>
</protein>
<feature type="chain" id="PRO_1000053935" description="Uridylate kinase">
    <location>
        <begin position="1"/>
        <end position="240"/>
    </location>
</feature>
<feature type="binding site" evidence="1">
    <location>
        <begin position="13"/>
        <end position="16"/>
    </location>
    <ligand>
        <name>ATP</name>
        <dbReference type="ChEBI" id="CHEBI:30616"/>
    </ligand>
</feature>
<feature type="binding site" evidence="1">
    <location>
        <position position="55"/>
    </location>
    <ligand>
        <name>UMP</name>
        <dbReference type="ChEBI" id="CHEBI:57865"/>
    </ligand>
</feature>
<feature type="binding site" evidence="1">
    <location>
        <position position="56"/>
    </location>
    <ligand>
        <name>ATP</name>
        <dbReference type="ChEBI" id="CHEBI:30616"/>
    </ligand>
</feature>
<feature type="binding site" evidence="1">
    <location>
        <position position="60"/>
    </location>
    <ligand>
        <name>ATP</name>
        <dbReference type="ChEBI" id="CHEBI:30616"/>
    </ligand>
</feature>
<feature type="binding site" evidence="1">
    <location>
        <position position="76"/>
    </location>
    <ligand>
        <name>UMP</name>
        <dbReference type="ChEBI" id="CHEBI:57865"/>
    </ligand>
</feature>
<feature type="binding site" evidence="1">
    <location>
        <begin position="137"/>
        <end position="144"/>
    </location>
    <ligand>
        <name>UMP</name>
        <dbReference type="ChEBI" id="CHEBI:57865"/>
    </ligand>
</feature>
<feature type="binding site" evidence="1">
    <location>
        <position position="164"/>
    </location>
    <ligand>
        <name>ATP</name>
        <dbReference type="ChEBI" id="CHEBI:30616"/>
    </ligand>
</feature>
<feature type="binding site" evidence="1">
    <location>
        <position position="170"/>
    </location>
    <ligand>
        <name>ATP</name>
        <dbReference type="ChEBI" id="CHEBI:30616"/>
    </ligand>
</feature>
<feature type="binding site" evidence="1">
    <location>
        <position position="173"/>
    </location>
    <ligand>
        <name>ATP</name>
        <dbReference type="ChEBI" id="CHEBI:30616"/>
    </ligand>
</feature>
<sequence>MQAKIKNKRVLVKFSGEALAGDNQFGIDIHVLDHIAKEIKSLVENAIEVGIVIGGGNIIRGVSAAQGGIIRRTSGDYMGMLATVINAVAMQEALEHIGLDTRVQSAIEIKEICESYIYRKAIRHLEKGRVVIFGAGTGNPFFTTDTAATLRAIEIGSDLIIKATKVDGIYDKDPNKFKDAKKLDTLSYNDALIGDIEVMDDTAISLAKDNKLPIVVCNMFKKGNLLQVIKHQQGVFSMVK</sequence>
<comment type="function">
    <text evidence="1">Catalyzes the reversible phosphorylation of UMP to UDP.</text>
</comment>
<comment type="catalytic activity">
    <reaction evidence="1">
        <text>UMP + ATP = UDP + ADP</text>
        <dbReference type="Rhea" id="RHEA:24400"/>
        <dbReference type="ChEBI" id="CHEBI:30616"/>
        <dbReference type="ChEBI" id="CHEBI:57865"/>
        <dbReference type="ChEBI" id="CHEBI:58223"/>
        <dbReference type="ChEBI" id="CHEBI:456216"/>
        <dbReference type="EC" id="2.7.4.22"/>
    </reaction>
</comment>
<comment type="activity regulation">
    <text evidence="1">Inhibited by UTP.</text>
</comment>
<comment type="pathway">
    <text evidence="1">Pyrimidine metabolism; CTP biosynthesis via de novo pathway; UDP from UMP (UMPK route): step 1/1.</text>
</comment>
<comment type="subunit">
    <text evidence="1">Homohexamer.</text>
</comment>
<comment type="subcellular location">
    <subcellularLocation>
        <location evidence="1">Cytoplasm</location>
    </subcellularLocation>
</comment>
<comment type="similarity">
    <text evidence="1">Belongs to the UMP kinase family.</text>
</comment>
<keyword id="KW-0067">ATP-binding</keyword>
<keyword id="KW-0963">Cytoplasm</keyword>
<keyword id="KW-0418">Kinase</keyword>
<keyword id="KW-0547">Nucleotide-binding</keyword>
<keyword id="KW-0665">Pyrimidine biosynthesis</keyword>
<keyword id="KW-0808">Transferase</keyword>
<organism>
    <name type="scientific">Helicobacter pylori (strain HPAG1)</name>
    <dbReference type="NCBI Taxonomy" id="357544"/>
    <lineage>
        <taxon>Bacteria</taxon>
        <taxon>Pseudomonadati</taxon>
        <taxon>Campylobacterota</taxon>
        <taxon>Epsilonproteobacteria</taxon>
        <taxon>Campylobacterales</taxon>
        <taxon>Helicobacteraceae</taxon>
        <taxon>Helicobacter</taxon>
    </lineage>
</organism>
<dbReference type="EC" id="2.7.4.22" evidence="1"/>
<dbReference type="EMBL" id="CP000241">
    <property type="protein sequence ID" value="ABF84829.1"/>
    <property type="molecule type" value="Genomic_DNA"/>
</dbReference>
<dbReference type="RefSeq" id="WP_001148049.1">
    <property type="nucleotide sequence ID" value="NC_008086.1"/>
</dbReference>
<dbReference type="SMR" id="Q1CT93"/>
<dbReference type="KEGG" id="hpa:HPAG1_0762"/>
<dbReference type="HOGENOM" id="CLU_033861_0_0_7"/>
<dbReference type="UniPathway" id="UPA00159">
    <property type="reaction ID" value="UER00275"/>
</dbReference>
<dbReference type="GO" id="GO:0005829">
    <property type="term" value="C:cytosol"/>
    <property type="evidence" value="ECO:0007669"/>
    <property type="project" value="TreeGrafter"/>
</dbReference>
<dbReference type="GO" id="GO:0005524">
    <property type="term" value="F:ATP binding"/>
    <property type="evidence" value="ECO:0007669"/>
    <property type="project" value="UniProtKB-KW"/>
</dbReference>
<dbReference type="GO" id="GO:0033862">
    <property type="term" value="F:UMP kinase activity"/>
    <property type="evidence" value="ECO:0007669"/>
    <property type="project" value="UniProtKB-EC"/>
</dbReference>
<dbReference type="GO" id="GO:0044210">
    <property type="term" value="P:'de novo' CTP biosynthetic process"/>
    <property type="evidence" value="ECO:0007669"/>
    <property type="project" value="UniProtKB-UniRule"/>
</dbReference>
<dbReference type="GO" id="GO:0006225">
    <property type="term" value="P:UDP biosynthetic process"/>
    <property type="evidence" value="ECO:0007669"/>
    <property type="project" value="TreeGrafter"/>
</dbReference>
<dbReference type="CDD" id="cd04254">
    <property type="entry name" value="AAK_UMPK-PyrH-Ec"/>
    <property type="match status" value="1"/>
</dbReference>
<dbReference type="FunFam" id="3.40.1160.10:FF:000001">
    <property type="entry name" value="Uridylate kinase"/>
    <property type="match status" value="1"/>
</dbReference>
<dbReference type="Gene3D" id="3.40.1160.10">
    <property type="entry name" value="Acetylglutamate kinase-like"/>
    <property type="match status" value="1"/>
</dbReference>
<dbReference type="HAMAP" id="MF_01220_B">
    <property type="entry name" value="PyrH_B"/>
    <property type="match status" value="1"/>
</dbReference>
<dbReference type="InterPro" id="IPR036393">
    <property type="entry name" value="AceGlu_kinase-like_sf"/>
</dbReference>
<dbReference type="InterPro" id="IPR001048">
    <property type="entry name" value="Asp/Glu/Uridylate_kinase"/>
</dbReference>
<dbReference type="InterPro" id="IPR011817">
    <property type="entry name" value="Uridylate_kinase"/>
</dbReference>
<dbReference type="InterPro" id="IPR015963">
    <property type="entry name" value="Uridylate_kinase_bac"/>
</dbReference>
<dbReference type="NCBIfam" id="TIGR02075">
    <property type="entry name" value="pyrH_bact"/>
    <property type="match status" value="1"/>
</dbReference>
<dbReference type="PANTHER" id="PTHR42833">
    <property type="entry name" value="URIDYLATE KINASE"/>
    <property type="match status" value="1"/>
</dbReference>
<dbReference type="PANTHER" id="PTHR42833:SF4">
    <property type="entry name" value="URIDYLATE KINASE PUMPKIN, CHLOROPLASTIC"/>
    <property type="match status" value="1"/>
</dbReference>
<dbReference type="Pfam" id="PF00696">
    <property type="entry name" value="AA_kinase"/>
    <property type="match status" value="1"/>
</dbReference>
<dbReference type="PIRSF" id="PIRSF005650">
    <property type="entry name" value="Uridylate_kin"/>
    <property type="match status" value="1"/>
</dbReference>
<dbReference type="SUPFAM" id="SSF53633">
    <property type="entry name" value="Carbamate kinase-like"/>
    <property type="match status" value="1"/>
</dbReference>
<gene>
    <name evidence="1" type="primary">pyrH</name>
    <name type="ordered locus">HPAG1_0762</name>
</gene>
<proteinExistence type="inferred from homology"/>
<name>PYRH_HELPH</name>